<gene>
    <name evidence="1" type="primary">rpoB</name>
    <name type="ordered locus">APH_1024</name>
</gene>
<accession>Q2GJ68</accession>
<organism>
    <name type="scientific">Anaplasma phagocytophilum (strain HZ)</name>
    <dbReference type="NCBI Taxonomy" id="212042"/>
    <lineage>
        <taxon>Bacteria</taxon>
        <taxon>Pseudomonadati</taxon>
        <taxon>Pseudomonadota</taxon>
        <taxon>Alphaproteobacteria</taxon>
        <taxon>Rickettsiales</taxon>
        <taxon>Anaplasmataceae</taxon>
        <taxon>Anaplasma</taxon>
        <taxon>phagocytophilum group</taxon>
    </lineage>
</organism>
<comment type="function">
    <text evidence="1">DNA-dependent RNA polymerase catalyzes the transcription of DNA into RNA using the four ribonucleoside triphosphates as substrates.</text>
</comment>
<comment type="catalytic activity">
    <reaction evidence="1">
        <text>RNA(n) + a ribonucleoside 5'-triphosphate = RNA(n+1) + diphosphate</text>
        <dbReference type="Rhea" id="RHEA:21248"/>
        <dbReference type="Rhea" id="RHEA-COMP:14527"/>
        <dbReference type="Rhea" id="RHEA-COMP:17342"/>
        <dbReference type="ChEBI" id="CHEBI:33019"/>
        <dbReference type="ChEBI" id="CHEBI:61557"/>
        <dbReference type="ChEBI" id="CHEBI:140395"/>
        <dbReference type="EC" id="2.7.7.6"/>
    </reaction>
</comment>
<comment type="subunit">
    <text evidence="1">The RNAP catalytic core consists of 2 alpha, 1 beta, 1 beta' and 1 omega subunit. When a sigma factor is associated with the core the holoenzyme is formed, which can initiate transcription.</text>
</comment>
<comment type="similarity">
    <text evidence="1">Belongs to the RNA polymerase beta chain family.</text>
</comment>
<dbReference type="EC" id="2.7.7.6" evidence="1"/>
<dbReference type="EMBL" id="CP000235">
    <property type="protein sequence ID" value="ABD43405.1"/>
    <property type="molecule type" value="Genomic_DNA"/>
</dbReference>
<dbReference type="RefSeq" id="WP_011451096.1">
    <property type="nucleotide sequence ID" value="NC_007797.1"/>
</dbReference>
<dbReference type="SMR" id="Q2GJ68"/>
<dbReference type="STRING" id="212042.APH_1024"/>
<dbReference type="PaxDb" id="212042-APH_1024"/>
<dbReference type="EnsemblBacteria" id="ABD43405">
    <property type="protein sequence ID" value="ABD43405"/>
    <property type="gene ID" value="APH_1024"/>
</dbReference>
<dbReference type="KEGG" id="aph:APH_1024"/>
<dbReference type="PATRIC" id="fig|212042.8.peg.1099"/>
<dbReference type="eggNOG" id="COG0085">
    <property type="taxonomic scope" value="Bacteria"/>
</dbReference>
<dbReference type="HOGENOM" id="CLU_000524_4_1_5"/>
<dbReference type="Proteomes" id="UP000001943">
    <property type="component" value="Chromosome"/>
</dbReference>
<dbReference type="GO" id="GO:0000428">
    <property type="term" value="C:DNA-directed RNA polymerase complex"/>
    <property type="evidence" value="ECO:0007669"/>
    <property type="project" value="UniProtKB-KW"/>
</dbReference>
<dbReference type="GO" id="GO:0003677">
    <property type="term" value="F:DNA binding"/>
    <property type="evidence" value="ECO:0007669"/>
    <property type="project" value="UniProtKB-UniRule"/>
</dbReference>
<dbReference type="GO" id="GO:0003899">
    <property type="term" value="F:DNA-directed RNA polymerase activity"/>
    <property type="evidence" value="ECO:0007669"/>
    <property type="project" value="UniProtKB-UniRule"/>
</dbReference>
<dbReference type="GO" id="GO:0032549">
    <property type="term" value="F:ribonucleoside binding"/>
    <property type="evidence" value="ECO:0007669"/>
    <property type="project" value="InterPro"/>
</dbReference>
<dbReference type="GO" id="GO:0006351">
    <property type="term" value="P:DNA-templated transcription"/>
    <property type="evidence" value="ECO:0007669"/>
    <property type="project" value="UniProtKB-UniRule"/>
</dbReference>
<dbReference type="CDD" id="cd00653">
    <property type="entry name" value="RNA_pol_B_RPB2"/>
    <property type="match status" value="1"/>
</dbReference>
<dbReference type="Gene3D" id="2.40.50.100">
    <property type="match status" value="1"/>
</dbReference>
<dbReference type="Gene3D" id="2.40.50.150">
    <property type="match status" value="1"/>
</dbReference>
<dbReference type="Gene3D" id="3.90.1100.10">
    <property type="match status" value="2"/>
</dbReference>
<dbReference type="Gene3D" id="2.30.150.10">
    <property type="entry name" value="DNA-directed RNA polymerase, beta subunit, external 1 domain"/>
    <property type="match status" value="1"/>
</dbReference>
<dbReference type="Gene3D" id="2.40.270.10">
    <property type="entry name" value="DNA-directed RNA polymerase, subunit 2, domain 6"/>
    <property type="match status" value="1"/>
</dbReference>
<dbReference type="Gene3D" id="3.90.1800.10">
    <property type="entry name" value="RNA polymerase alpha subunit dimerisation domain"/>
    <property type="match status" value="1"/>
</dbReference>
<dbReference type="Gene3D" id="3.90.1110.10">
    <property type="entry name" value="RNA polymerase Rpb2, domain 2"/>
    <property type="match status" value="1"/>
</dbReference>
<dbReference type="HAMAP" id="MF_01321">
    <property type="entry name" value="RNApol_bact_RpoB"/>
    <property type="match status" value="1"/>
</dbReference>
<dbReference type="InterPro" id="IPR042107">
    <property type="entry name" value="DNA-dir_RNA_pol_bsu_ext_1_sf"/>
</dbReference>
<dbReference type="InterPro" id="IPR019462">
    <property type="entry name" value="DNA-dir_RNA_pol_bsu_external_1"/>
</dbReference>
<dbReference type="InterPro" id="IPR015712">
    <property type="entry name" value="DNA-dir_RNA_pol_su2"/>
</dbReference>
<dbReference type="InterPro" id="IPR007120">
    <property type="entry name" value="DNA-dir_RNAP_su2_dom"/>
</dbReference>
<dbReference type="InterPro" id="IPR037033">
    <property type="entry name" value="DNA-dir_RNAP_su2_hyb_sf"/>
</dbReference>
<dbReference type="InterPro" id="IPR010243">
    <property type="entry name" value="RNA_pol_bsu_bac"/>
</dbReference>
<dbReference type="InterPro" id="IPR007121">
    <property type="entry name" value="RNA_pol_bsu_CS"/>
</dbReference>
<dbReference type="InterPro" id="IPR007644">
    <property type="entry name" value="RNA_pol_bsu_protrusion"/>
</dbReference>
<dbReference type="InterPro" id="IPR007642">
    <property type="entry name" value="RNA_pol_Rpb2_2"/>
</dbReference>
<dbReference type="InterPro" id="IPR037034">
    <property type="entry name" value="RNA_pol_Rpb2_2_sf"/>
</dbReference>
<dbReference type="InterPro" id="IPR007645">
    <property type="entry name" value="RNA_pol_Rpb2_3"/>
</dbReference>
<dbReference type="InterPro" id="IPR007641">
    <property type="entry name" value="RNA_pol_Rpb2_7"/>
</dbReference>
<dbReference type="InterPro" id="IPR014724">
    <property type="entry name" value="RNA_pol_RPB2_OB-fold"/>
</dbReference>
<dbReference type="NCBIfam" id="NF001616">
    <property type="entry name" value="PRK00405.1"/>
    <property type="match status" value="1"/>
</dbReference>
<dbReference type="NCBIfam" id="TIGR02013">
    <property type="entry name" value="rpoB"/>
    <property type="match status" value="1"/>
</dbReference>
<dbReference type="PANTHER" id="PTHR20856">
    <property type="entry name" value="DNA-DIRECTED RNA POLYMERASE I SUBUNIT 2"/>
    <property type="match status" value="1"/>
</dbReference>
<dbReference type="Pfam" id="PF04563">
    <property type="entry name" value="RNA_pol_Rpb2_1"/>
    <property type="match status" value="1"/>
</dbReference>
<dbReference type="Pfam" id="PF04561">
    <property type="entry name" value="RNA_pol_Rpb2_2"/>
    <property type="match status" value="2"/>
</dbReference>
<dbReference type="Pfam" id="PF04565">
    <property type="entry name" value="RNA_pol_Rpb2_3"/>
    <property type="match status" value="1"/>
</dbReference>
<dbReference type="Pfam" id="PF10385">
    <property type="entry name" value="RNA_pol_Rpb2_45"/>
    <property type="match status" value="1"/>
</dbReference>
<dbReference type="Pfam" id="PF00562">
    <property type="entry name" value="RNA_pol_Rpb2_6"/>
    <property type="match status" value="1"/>
</dbReference>
<dbReference type="Pfam" id="PF04560">
    <property type="entry name" value="RNA_pol_Rpb2_7"/>
    <property type="match status" value="1"/>
</dbReference>
<dbReference type="SUPFAM" id="SSF64484">
    <property type="entry name" value="beta and beta-prime subunits of DNA dependent RNA-polymerase"/>
    <property type="match status" value="1"/>
</dbReference>
<dbReference type="PROSITE" id="PS01166">
    <property type="entry name" value="RNA_POL_BETA"/>
    <property type="match status" value="1"/>
</dbReference>
<sequence>MSSAGDSGPGYVLNDFDAVPRLSYARSIDIRDSLSDLIRIQRDSYDAFIGIDEGSSGGIQSIFQSMFPIRDPLGRAVLEFVSCNIGEPQYDEYECIKRGITFSVPMRITLRFVVWKVQEVSFKEVKYVVDEGTLERSVKYMKEQEVSIGDLPMMTSYGTFIINGIERVIVSQMHRSPGVFFDSDKGKTYSSGKLIYSARIIPYRGSWLDFEFDIKDIIYFRIDKKRKLPVTYLLKALGMSNNDILDTFYDKVLYVRSDKGWKVPFVVDRFKGVRLSYDLMDVDGNVLIKANTRITLRIAKKLYADGLREYLVPFAGISGLFVATDLVDPASGAVIVSAGEAIAAEHIVKLELFDISEIAFLNIDFLTVGPYVLNTLFLDRHITQEDALFEIYRVLRSGESPNLEAVKSFFKGLFFEPDRYDLSVVGRIKLNSHLRLDIDENLTVLTKDDIVHVIKKLVLLPDGEGVVDDIDHLGNRRVRSVGEFIENQFRVGILRLERMIMDYMSSVNFDNAVPCDFVNPKILATVLKDFFSSSQLSQFMDQTNPLSEVTHKRRLSALGPGGLTRERAGFEVRDVHPTHYGRICPIETPEGQNIGLISSLAIYAKINKYGFIESPYRKVIDGVVTDSVEYLLATQESDYYIADAGAALDENNRFVDDMLYCRHGGNFVMVKREDVNYIDVSPKQIVSVAASLIPFLENNDANRALMGSNMQRQAVPLLKAEAPLVGTGMESVVAAGSGAVVLAKRDGVVHRVDGSYIVIRAFDKNKDEYLGVDIYKLRKFQRSNHNTCINQRPIVKIGDYVRTNDVIADGAAIDRGELALGKNVLVAFMSWQGYNFEDSIVISSDVVKRDVFTSIHIEEFECVVRDTPLGPEKIMRSVPDVNEESLSHLDDVGIVNIGAEVSAGSVLVGKVTPRPPVSLPPETKLLVTIFGEKVFDCVDSSLYLPPDVEGTVIDVHVFVRRGVEENDRSLLIKQSEVNSFRKERDYEIDVVSEYFYDELKKLLCSADLPLNGHADVESLLAAKSLEALWEIGLSNPKISAKVADMKGKFDELITEAHSKFDQKIDKLNYGYDLPQGVLTIVKVFVAVKHNLQPGDKMAGRHGNKGVISRIVPVEDMPHLEDGTPVDIILNSLGVPSRMNIGQILETHLGWAAVNLGHRVGRMLDSGEEEGPVVESIRSFLSEVYEGQKLKEDVASMSDEALLKFANRLRRGVPMAAPVFEGPKDAQISRLLELADVDPSGQVDLYDGRSGQKFDRKVTVGYIYMLKLHHLVDDKIHARSVGPYGLVTQQPLGGKSHFGGQRFGEMECWALQAYGAAYTLQEMLTVKSDDIVGRVRIYESIIKGDSNFECGIPESFNVMVKELRSLCLDVVLKQDKEFTSSKVE</sequence>
<feature type="chain" id="PRO_0000237296" description="DNA-directed RNA polymerase subunit beta">
    <location>
        <begin position="1"/>
        <end position="1383"/>
    </location>
</feature>
<evidence type="ECO:0000255" key="1">
    <source>
        <dbReference type="HAMAP-Rule" id="MF_01321"/>
    </source>
</evidence>
<name>RPOB_ANAPZ</name>
<keyword id="KW-0240">DNA-directed RNA polymerase</keyword>
<keyword id="KW-0548">Nucleotidyltransferase</keyword>
<keyword id="KW-0804">Transcription</keyword>
<keyword id="KW-0808">Transferase</keyword>
<proteinExistence type="inferred from homology"/>
<reference key="1">
    <citation type="journal article" date="2006" name="PLoS Genet.">
        <title>Comparative genomics of emerging human ehrlichiosis agents.</title>
        <authorList>
            <person name="Dunning Hotopp J.C."/>
            <person name="Lin M."/>
            <person name="Madupu R."/>
            <person name="Crabtree J."/>
            <person name="Angiuoli S.V."/>
            <person name="Eisen J.A."/>
            <person name="Seshadri R."/>
            <person name="Ren Q."/>
            <person name="Wu M."/>
            <person name="Utterback T.R."/>
            <person name="Smith S."/>
            <person name="Lewis M."/>
            <person name="Khouri H."/>
            <person name="Zhang C."/>
            <person name="Niu H."/>
            <person name="Lin Q."/>
            <person name="Ohashi N."/>
            <person name="Zhi N."/>
            <person name="Nelson W.C."/>
            <person name="Brinkac L.M."/>
            <person name="Dodson R.J."/>
            <person name="Rosovitz M.J."/>
            <person name="Sundaram J.P."/>
            <person name="Daugherty S.C."/>
            <person name="Davidsen T."/>
            <person name="Durkin A.S."/>
            <person name="Gwinn M.L."/>
            <person name="Haft D.H."/>
            <person name="Selengut J.D."/>
            <person name="Sullivan S.A."/>
            <person name="Zafar N."/>
            <person name="Zhou L."/>
            <person name="Benahmed F."/>
            <person name="Forberger H."/>
            <person name="Halpin R."/>
            <person name="Mulligan S."/>
            <person name="Robinson J."/>
            <person name="White O."/>
            <person name="Rikihisa Y."/>
            <person name="Tettelin H."/>
        </authorList>
    </citation>
    <scope>NUCLEOTIDE SEQUENCE [LARGE SCALE GENOMIC DNA]</scope>
    <source>
        <strain>HZ</strain>
    </source>
</reference>
<protein>
    <recommendedName>
        <fullName evidence="1">DNA-directed RNA polymerase subunit beta</fullName>
        <shortName evidence="1">RNAP subunit beta</shortName>
        <ecNumber evidence="1">2.7.7.6</ecNumber>
    </recommendedName>
    <alternativeName>
        <fullName evidence="1">RNA polymerase subunit beta</fullName>
    </alternativeName>
    <alternativeName>
        <fullName evidence="1">Transcriptase subunit beta</fullName>
    </alternativeName>
</protein>